<organism>
    <name type="scientific">Fritillaria agrestis</name>
    <name type="common">Stinkbells</name>
    <dbReference type="NCBI Taxonomy" id="64177"/>
    <lineage>
        <taxon>Eukaryota</taxon>
        <taxon>Viridiplantae</taxon>
        <taxon>Streptophyta</taxon>
        <taxon>Embryophyta</taxon>
        <taxon>Tracheophyta</taxon>
        <taxon>Spermatophyta</taxon>
        <taxon>Magnoliopsida</taxon>
        <taxon>Liliopsida</taxon>
        <taxon>Liliales</taxon>
        <taxon>Liliaceae</taxon>
        <taxon>Fritillaria</taxon>
    </lineage>
</organism>
<gene>
    <name evidence="1" type="primary">RBCS3</name>
</gene>
<keyword id="KW-0113">Calvin cycle</keyword>
<keyword id="KW-0120">Carbon dioxide fixation</keyword>
<keyword id="KW-0150">Chloroplast</keyword>
<keyword id="KW-0601">Photorespiration</keyword>
<keyword id="KW-0602">Photosynthesis</keyword>
<keyword id="KW-0934">Plastid</keyword>
<keyword id="KW-0809">Transit peptide</keyword>
<name>RBS3_FRIAG</name>
<protein>
    <recommendedName>
        <fullName evidence="1">Ribulose bisphosphate carboxylase small subunit, chloroplastic 3</fullName>
        <shortName evidence="1">RuBisCO small subunit 3</shortName>
    </recommendedName>
</protein>
<reference key="1">
    <citation type="submission" date="1997-09" db="EMBL/GenBank/DDBJ databases">
        <authorList>
            <person name="Panico E."/>
            <person name="Baysdorfer C."/>
        </authorList>
    </citation>
    <scope>NUCLEOTIDE SEQUENCE [MRNA]</scope>
</reference>
<dbReference type="EMBL" id="AF024574">
    <property type="protein sequence ID" value="AAB84181.1"/>
    <property type="molecule type" value="mRNA"/>
</dbReference>
<dbReference type="SMR" id="O22573"/>
<dbReference type="GO" id="GO:0009507">
    <property type="term" value="C:chloroplast"/>
    <property type="evidence" value="ECO:0007669"/>
    <property type="project" value="UniProtKB-SubCell"/>
</dbReference>
<dbReference type="GO" id="GO:0016984">
    <property type="term" value="F:ribulose-bisphosphate carboxylase activity"/>
    <property type="evidence" value="ECO:0007669"/>
    <property type="project" value="UniProtKB-UniRule"/>
</dbReference>
<dbReference type="GO" id="GO:0009853">
    <property type="term" value="P:photorespiration"/>
    <property type="evidence" value="ECO:0007669"/>
    <property type="project" value="UniProtKB-KW"/>
</dbReference>
<dbReference type="GO" id="GO:0019253">
    <property type="term" value="P:reductive pentose-phosphate cycle"/>
    <property type="evidence" value="ECO:0007669"/>
    <property type="project" value="UniProtKB-UniRule"/>
</dbReference>
<dbReference type="CDD" id="cd03527">
    <property type="entry name" value="RuBisCO_small"/>
    <property type="match status" value="1"/>
</dbReference>
<dbReference type="FunFam" id="3.30.190.10:FF:000001">
    <property type="entry name" value="Ribulose bisphosphate carboxylase small chain, chloroplastic"/>
    <property type="match status" value="1"/>
</dbReference>
<dbReference type="Gene3D" id="3.30.190.10">
    <property type="entry name" value="Ribulose bisphosphate carboxylase, small subunit"/>
    <property type="match status" value="1"/>
</dbReference>
<dbReference type="HAMAP" id="MF_00859">
    <property type="entry name" value="RuBisCO_S_bact"/>
    <property type="match status" value="1"/>
</dbReference>
<dbReference type="InterPro" id="IPR024681">
    <property type="entry name" value="RuBisCO_ssu"/>
</dbReference>
<dbReference type="InterPro" id="IPR000894">
    <property type="entry name" value="RuBisCO_ssu_dom"/>
</dbReference>
<dbReference type="InterPro" id="IPR024680">
    <property type="entry name" value="RuBisCO_ssu_N"/>
</dbReference>
<dbReference type="InterPro" id="IPR036385">
    <property type="entry name" value="RuBisCO_ssu_sf"/>
</dbReference>
<dbReference type="PANTHER" id="PTHR31262">
    <property type="entry name" value="RIBULOSE BISPHOSPHATE CARBOXYLASE SMALL CHAIN 1, CHLOROPLASTIC"/>
    <property type="match status" value="1"/>
</dbReference>
<dbReference type="PANTHER" id="PTHR31262:SF10">
    <property type="entry name" value="RIBULOSE BISPHOSPHATE CARBOXYLASE SMALL SUBUNIT 1A, CHLOROPLASTIC-RELATED"/>
    <property type="match status" value="1"/>
</dbReference>
<dbReference type="Pfam" id="PF12338">
    <property type="entry name" value="RbcS"/>
    <property type="match status" value="1"/>
</dbReference>
<dbReference type="Pfam" id="PF00101">
    <property type="entry name" value="RuBisCO_small"/>
    <property type="match status" value="1"/>
</dbReference>
<dbReference type="PRINTS" id="PR00152">
    <property type="entry name" value="RUBISCOSMALL"/>
</dbReference>
<dbReference type="SMART" id="SM00961">
    <property type="entry name" value="RuBisCO_small"/>
    <property type="match status" value="1"/>
</dbReference>
<dbReference type="SUPFAM" id="SSF55239">
    <property type="entry name" value="RuBisCO, small subunit"/>
    <property type="match status" value="1"/>
</dbReference>
<evidence type="ECO:0000255" key="1">
    <source>
        <dbReference type="HAMAP-Rule" id="MF_00860"/>
    </source>
</evidence>
<sequence length="179" mass="19615">MASSATMLSSVATAARAAPAQASMVAPFVGLKSASAFPVTQKPATGLSTLPSNGGRVQCMKVWPIVGLKKFETLSYLPTLSVESLLKQIEYLIRNGWVPCLEFSLEGFVSRDNNKSPGYYDGRYWTMWKLPMFGCTDAAQVVKEAAECKKEYPAAFIRVIGFDNVRQVQCVSFIVEKPE</sequence>
<comment type="function">
    <text evidence="1">RuBisCO catalyzes two reactions: the carboxylation of D-ribulose 1,5-bisphosphate, the primary event in carbon dioxide fixation, as well as the oxidative fragmentation of the pentose substrate. Both reactions occur simultaneously and in competition at the same active site. Although the small subunit is not catalytic it is essential for maximal activity.</text>
</comment>
<comment type="subunit">
    <text evidence="1">Heterohexadecamer of 8 large and 8 small subunits.</text>
</comment>
<comment type="subcellular location">
    <subcellularLocation>
        <location evidence="1">Plastid</location>
        <location evidence="1">Chloroplast</location>
    </subcellularLocation>
</comment>
<comment type="miscellaneous">
    <text evidence="1">The basic functional RuBisCO is composed of a large chain homodimer in a 'head-to-tail' conformation. In form I RuBisCO this homodimer is arranged in a barrel-like tetramer with the small subunits forming a tetrameric 'cap' on each end of the 'barrel'.</text>
</comment>
<comment type="similarity">
    <text evidence="1">Belongs to the RuBisCO small chain family.</text>
</comment>
<proteinExistence type="evidence at transcript level"/>
<accession>O22573</accession>
<feature type="transit peptide" description="Chloroplast" evidence="1">
    <location>
        <begin position="1"/>
        <end position="58"/>
    </location>
</feature>
<feature type="chain" id="PRO_0000031502" description="Ribulose bisphosphate carboxylase small subunit, chloroplastic 3" evidence="1">
    <location>
        <begin position="59"/>
        <end position="179"/>
    </location>
</feature>